<dbReference type="EMBL" id="CP001600">
    <property type="protein sequence ID" value="ACR70484.1"/>
    <property type="molecule type" value="Genomic_DNA"/>
</dbReference>
<dbReference type="SMR" id="C5BAS5"/>
<dbReference type="STRING" id="67780.B6E78_08415"/>
<dbReference type="KEGG" id="eic:NT01EI_3346"/>
<dbReference type="PATRIC" id="fig|634503.3.peg.2973"/>
<dbReference type="HOGENOM" id="CLU_007884_6_1_6"/>
<dbReference type="OrthoDB" id="9796287at2"/>
<dbReference type="Proteomes" id="UP000001485">
    <property type="component" value="Chromosome"/>
</dbReference>
<dbReference type="GO" id="GO:0005737">
    <property type="term" value="C:cytoplasm"/>
    <property type="evidence" value="ECO:0007669"/>
    <property type="project" value="UniProtKB-SubCell"/>
</dbReference>
<dbReference type="GO" id="GO:0005542">
    <property type="term" value="F:folic acid binding"/>
    <property type="evidence" value="ECO:0007669"/>
    <property type="project" value="UniProtKB-UniRule"/>
</dbReference>
<dbReference type="GO" id="GO:0016226">
    <property type="term" value="P:iron-sulfur cluster assembly"/>
    <property type="evidence" value="ECO:0007669"/>
    <property type="project" value="TreeGrafter"/>
</dbReference>
<dbReference type="GO" id="GO:0009451">
    <property type="term" value="P:RNA modification"/>
    <property type="evidence" value="ECO:0007669"/>
    <property type="project" value="InterPro"/>
</dbReference>
<dbReference type="GO" id="GO:0008033">
    <property type="term" value="P:tRNA processing"/>
    <property type="evidence" value="ECO:0007669"/>
    <property type="project" value="UniProtKB-UniRule"/>
</dbReference>
<dbReference type="Gene3D" id="2.40.30.160">
    <property type="match status" value="1"/>
</dbReference>
<dbReference type="Gene3D" id="3.30.70.1630">
    <property type="match status" value="1"/>
</dbReference>
<dbReference type="Gene3D" id="3.30.70.1400">
    <property type="entry name" value="Aminomethyltransferase beta-barrel domains"/>
    <property type="match status" value="1"/>
</dbReference>
<dbReference type="HAMAP" id="MF_01175">
    <property type="entry name" value="tRNA_modifying_YgfZ"/>
    <property type="match status" value="1"/>
</dbReference>
<dbReference type="InterPro" id="IPR029043">
    <property type="entry name" value="GcvT/YgfZ_C"/>
</dbReference>
<dbReference type="InterPro" id="IPR023758">
    <property type="entry name" value="tRNA-modifying_YgfZ"/>
</dbReference>
<dbReference type="InterPro" id="IPR045179">
    <property type="entry name" value="YgfZ/GcvT"/>
</dbReference>
<dbReference type="InterPro" id="IPR017703">
    <property type="entry name" value="YgfZ/GcvT_CS"/>
</dbReference>
<dbReference type="InterPro" id="IPR048451">
    <property type="entry name" value="YgfZ_barrel"/>
</dbReference>
<dbReference type="NCBIfam" id="NF007110">
    <property type="entry name" value="PRK09559.1"/>
    <property type="match status" value="1"/>
</dbReference>
<dbReference type="NCBIfam" id="TIGR03317">
    <property type="entry name" value="ygfZ_signature"/>
    <property type="match status" value="1"/>
</dbReference>
<dbReference type="PANTHER" id="PTHR22602">
    <property type="entry name" value="TRANSFERASE CAF17, MITOCHONDRIAL-RELATED"/>
    <property type="match status" value="1"/>
</dbReference>
<dbReference type="PANTHER" id="PTHR22602:SF0">
    <property type="entry name" value="TRANSFERASE CAF17, MITOCHONDRIAL-RELATED"/>
    <property type="match status" value="1"/>
</dbReference>
<dbReference type="Pfam" id="PF21130">
    <property type="entry name" value="YgfZ_barrel"/>
    <property type="match status" value="1"/>
</dbReference>
<dbReference type="SUPFAM" id="SSF101790">
    <property type="entry name" value="Aminomethyltransferase beta-barrel domain"/>
    <property type="match status" value="1"/>
</dbReference>
<dbReference type="SUPFAM" id="SSF103025">
    <property type="entry name" value="Folate-binding domain"/>
    <property type="match status" value="1"/>
</dbReference>
<protein>
    <recommendedName>
        <fullName evidence="1">tRNA-modifying protein YgfZ</fullName>
    </recommendedName>
</protein>
<accession>C5BAS5</accession>
<proteinExistence type="inferred from homology"/>
<reference key="1">
    <citation type="submission" date="2009-03" db="EMBL/GenBank/DDBJ databases">
        <title>Complete genome sequence of Edwardsiella ictaluri 93-146.</title>
        <authorList>
            <person name="Williams M.L."/>
            <person name="Gillaspy A.F."/>
            <person name="Dyer D.W."/>
            <person name="Thune R.L."/>
            <person name="Waldbieser G.C."/>
            <person name="Schuster S.C."/>
            <person name="Gipson J."/>
            <person name="Zaitshik J."/>
            <person name="Landry C."/>
            <person name="Lawrence M.L."/>
        </authorList>
    </citation>
    <scope>NUCLEOTIDE SEQUENCE [LARGE SCALE GENOMIC DNA]</scope>
    <source>
        <strain>93-146</strain>
    </source>
</reference>
<feature type="chain" id="PRO_1000213745" description="tRNA-modifying protein YgfZ">
    <location>
        <begin position="1"/>
        <end position="331"/>
    </location>
</feature>
<feature type="binding site" evidence="1">
    <location>
        <position position="28"/>
    </location>
    <ligand>
        <name>folate</name>
        <dbReference type="ChEBI" id="CHEBI:62501"/>
    </ligand>
</feature>
<feature type="binding site" evidence="1">
    <location>
        <position position="191"/>
    </location>
    <ligand>
        <name>folate</name>
        <dbReference type="ChEBI" id="CHEBI:62501"/>
    </ligand>
</feature>
<sequence length="331" mass="36173">MNLNAPFSPQPPLAAEHLPLTLMRLDDWLPINVSGPDAQSYLQGQLTADLPSLAATQHTLCGHCDAQGKLWSSLRLLRRRDGFTYLLRRSVATLQMLELKKYAVFAKASIVSDEGAVLLGVAGAQASEALGALFPRLPDADAPLLQAGRSHLLYMAWPQPRYLLICDDADEAERIFAPLSARARLADSAQWLALDIESGIPLIDEPNCDSFLPQAVNLQALGGISFTKGCYSGQEMVARAKYRGANRRALFWLRGSAERLPHASEDLELRLGDSWRRSGTVLAAQRLADGGVYLQAVLSSDLPADSVLRVRDDARSQLTLSPLPYSTDQQE</sequence>
<keyword id="KW-0963">Cytoplasm</keyword>
<keyword id="KW-0290">Folate-binding</keyword>
<keyword id="KW-0819">tRNA processing</keyword>
<evidence type="ECO:0000255" key="1">
    <source>
        <dbReference type="HAMAP-Rule" id="MF_01175"/>
    </source>
</evidence>
<comment type="function">
    <text evidence="1">Folate-binding protein involved in regulating the level of ATP-DnaA and in the modification of some tRNAs. It is probably a key factor in regulatory networks that act via tRNA modification, such as initiation of chromosomal replication.</text>
</comment>
<comment type="subcellular location">
    <subcellularLocation>
        <location evidence="1">Cytoplasm</location>
    </subcellularLocation>
</comment>
<comment type="similarity">
    <text evidence="1">Belongs to the tRNA-modifying YgfZ family.</text>
</comment>
<organism>
    <name type="scientific">Edwardsiella ictaluri (strain 93-146)</name>
    <dbReference type="NCBI Taxonomy" id="634503"/>
    <lineage>
        <taxon>Bacteria</taxon>
        <taxon>Pseudomonadati</taxon>
        <taxon>Pseudomonadota</taxon>
        <taxon>Gammaproteobacteria</taxon>
        <taxon>Enterobacterales</taxon>
        <taxon>Hafniaceae</taxon>
        <taxon>Edwardsiella</taxon>
    </lineage>
</organism>
<name>YGFZ_EDWI9</name>
<gene>
    <name type="ordered locus">NT01EI_3346</name>
</gene>